<sequence>MATLLLLLGVLVVSPDALGSTTAVQTPTSGEPLVSTSEPLSSKMYTTSITSDPKADSTGDQTSALPPSTSINEGSPLWTSIGASTGSPLPEPTTYQEVSIKMSSVPQETPHATSHPAVPITANSLGSHTVTGGTITTNSPETSSRTSGAPVTTAASSLETSRGTSGPPLTMATVSLETSKGTSGPPVTMATDSLETSTGTTGPPVTMTTGSLEPSSGASGPQVSSVKLSTMMSPTTSTNASTVPFRNPDENSRGMLPVAVLVALLAVIVLVALLLLWRRRQKRRTGALVLSRGGKRNGVVDAWAGPAQVPEEGAVTVTVGGSGGDKGSGFPDGEGSSRRPTLTTFFGRRKSRQGSLAMEELKSGSGPSLKGEEEPLVASEDGAVDAPAPDEPEGGDGAAP</sequence>
<comment type="function">
    <text evidence="2 8 10">Predominant cell surface sialoprotein of leukocytes which regulates multiple T-cell functions, including T-cell activation, proliferation, differentiation, trafficking and migration. Positively regulates T-cell trafficking to lymph-nodes via its association with ERM proteins (EZR, RDX and MSN) (By similarity). Negatively regulates Th2 cell differentiation and predisposes the differentiation of T-cells towards a Th1 lineage commitment. Promotes the expression of IFN-gamma by T-cells during T-cell receptor (TCR) activation of naive cells and induces the expression of IFN-gamma by CD4(+) T-cells and to a lesser extent by CD8(+) T-cells (PubMed:18036228). Plays a role in preparing T-cells for cytokine sensing and differentiation into effector cells by inducing the expression of cytokine receptors IFNGR and IL4R, promoting IFNGR and IL4R signaling and by mediating the clustering of IFNGR with TCR (PubMed:24328034). Acts as a major E-selectin ligand responsible for Th17 cell rolling on activated vasculature and recruitment during inflammation. Mediates Th17 cells, but not Th1 cells, adhesion to E-selectin. Acts as a T-cell counter-receptor for SIGLEC1 (By similarity).</text>
</comment>
<comment type="function">
    <molecule>CD43 cytoplasmic tail</molecule>
    <text evidence="2">Protects cells from apoptotic signals, promoting cell survival.</text>
</comment>
<comment type="subunit">
    <text evidence="2">Interacts with SIGLEC1.</text>
</comment>
<comment type="subunit">
    <molecule>CD43 cytoplasmic tail</molecule>
    <text evidence="1 2 5">Monomer (By similarity). Interacts with CTNNB1 (PubMed:15003504). Interacts with RDX (via FERM domain), EZR and MSN (By similarity).</text>
</comment>
<comment type="interaction">
    <interactant intactId="EBI-10049055">
        <id>P16150</id>
    </interactant>
    <interactant intactId="EBI-11343438">
        <id>Q3SXY8</id>
        <label>ARL13B</label>
    </interactant>
    <organismsDiffer>false</organismsDiffer>
    <experiments>3</experiments>
</comment>
<comment type="interaction">
    <interactant intactId="EBI-10049055">
        <id>P16150</id>
    </interactant>
    <interactant intactId="EBI-2680384">
        <id>Q9BQA9</id>
        <label>CYBC1</label>
    </interactant>
    <organismsDiffer>false</organismsDiffer>
    <experiments>3</experiments>
</comment>
<comment type="interaction">
    <interactant intactId="EBI-10049055">
        <id>P16150</id>
    </interactant>
    <interactant intactId="EBI-781551">
        <id>Q9Y282</id>
        <label>ERGIC3</label>
    </interactant>
    <organismsDiffer>false</organismsDiffer>
    <experiments>3</experiments>
</comment>
<comment type="interaction">
    <interactant intactId="EBI-10049055">
        <id>P16150</id>
    </interactant>
    <interactant intactId="EBI-608347">
        <id>Q04941</id>
        <label>PLP2</label>
    </interactant>
    <organismsDiffer>false</organismsDiffer>
    <experiments>3</experiments>
</comment>
<comment type="interaction">
    <interactant intactId="EBI-10049055">
        <id>P16150</id>
    </interactant>
    <interactant intactId="EBI-14210385">
        <id>Q59EV6</id>
        <label>PPGB</label>
    </interactant>
    <organismsDiffer>false</organismsDiffer>
    <experiments>3</experiments>
</comment>
<comment type="interaction">
    <interactant intactId="EBI-10049055">
        <id>P16150</id>
    </interactant>
    <interactant intactId="EBI-347996">
        <id>O43765</id>
        <label>SGTA</label>
    </interactant>
    <organismsDiffer>false</organismsDiffer>
    <experiments>5</experiments>
</comment>
<comment type="interaction">
    <interactant intactId="EBI-10049055">
        <id>P16150</id>
    </interactant>
    <interactant intactId="EBI-947187">
        <id>Q9UHD9</id>
        <label>UBQLN2</label>
    </interactant>
    <organismsDiffer>false</organismsDiffer>
    <experiments>3</experiments>
</comment>
<comment type="subcellular location">
    <subcellularLocation>
        <location evidence="3">Membrane</location>
        <topology evidence="3">Single-pass type I membrane protein</topology>
    </subcellularLocation>
    <subcellularLocation>
        <location evidence="1">Cell projection</location>
        <location evidence="1">Microvillus</location>
    </subcellularLocation>
    <subcellularLocation>
        <location evidence="2">Cell projection</location>
        <location evidence="2">Uropodium</location>
    </subcellularLocation>
    <text evidence="1 2">Localizes to the uropodium and microvilli via its interaction with ERM proteins (EZR, RDX and MSN).</text>
</comment>
<comment type="subcellular location">
    <molecule>CD43 cytoplasmic tail</molecule>
    <subcellularLocation>
        <location evidence="5">Nucleus</location>
    </subcellularLocation>
    <subcellularLocation>
        <location evidence="2">Nucleus</location>
        <location evidence="2">PML body</location>
    </subcellularLocation>
    <text evidence="2">The sumoylated form localizes to the PML body.</text>
</comment>
<comment type="tissue specificity">
    <text>Cell surface of thymocytes, T-lymphocytes, neutrophils, plasma cells and myelomas.</text>
</comment>
<comment type="PTM">
    <text evidence="7">Glycosylated; has a high content of sialic acid and O-linked carbohydrate structures.</text>
</comment>
<comment type="PTM">
    <text evidence="2">Phosphorylation at Ser-355 is regulated by chemokines, requires its association with ERM proteins (EZR, RDX and MSN) and is essential for its function in the regulation of T-cell trafficking to lymph nodes.</text>
</comment>
<comment type="PTM">
    <text>Has a high content of sialic acid and O-linked carbohydrate structures.</text>
</comment>
<comment type="PTM">
    <text evidence="6 9">Cleavage by CTSG releases its extracellular domain and triggers its intramembrane proteolysis by gamma-secretase releasing the CD43 cytoplasmic tail chain (CD43-ct) which translocates to the nucleus.</text>
</comment>
<comment type="PTM">
    <molecule>CD43 cytoplasmic tail</molecule>
    <text>Sumoylated.</text>
</comment>
<name>LEUK_HUMAN</name>
<organism>
    <name type="scientific">Homo sapiens</name>
    <name type="common">Human</name>
    <dbReference type="NCBI Taxonomy" id="9606"/>
    <lineage>
        <taxon>Eukaryota</taxon>
        <taxon>Metazoa</taxon>
        <taxon>Chordata</taxon>
        <taxon>Craniata</taxon>
        <taxon>Vertebrata</taxon>
        <taxon>Euteleostomi</taxon>
        <taxon>Mammalia</taxon>
        <taxon>Eutheria</taxon>
        <taxon>Euarchontoglires</taxon>
        <taxon>Primates</taxon>
        <taxon>Haplorrhini</taxon>
        <taxon>Catarrhini</taxon>
        <taxon>Hominidae</taxon>
        <taxon>Homo</taxon>
    </lineage>
</organism>
<protein>
    <recommendedName>
        <fullName>Leukosialin</fullName>
    </recommendedName>
    <alternativeName>
        <fullName evidence="13">GPL115</fullName>
    </alternativeName>
    <alternativeName>
        <fullName>Galactoglycoprotein</fullName>
        <shortName>GALGP</shortName>
    </alternativeName>
    <alternativeName>
        <fullName>Leukocyte sialoglycoprotein</fullName>
    </alternativeName>
    <alternativeName>
        <fullName>Sialophorin</fullName>
    </alternativeName>
    <cdAntigenName>CD43</cdAntigenName>
    <component>
        <recommendedName>
            <fullName evidence="12">CD43 cytoplasmic tail</fullName>
            <shortName evidence="12">CD43-ct</shortName>
            <shortName evidence="12">CD43ct</shortName>
        </recommendedName>
    </component>
</protein>
<accession>P16150</accession>
<accession>A8K9B1</accession>
<reference key="1">
    <citation type="journal article" date="1989" name="Proc. Natl. Acad. Sci. U.S.A.">
        <title>Characterization of cDNAs encoding human leukosialin and localization of the leukosialin gene to chromosome 16.</title>
        <authorList>
            <person name="Pallant A."/>
            <person name="Eskenazi A."/>
            <person name="Mattei M.-G."/>
            <person name="Fournier R.E.K."/>
            <person name="Carlsson S.R."/>
            <person name="Fukuda M."/>
            <person name="Frelinger J.G."/>
        </authorList>
    </citation>
    <scope>NUCLEOTIDE SEQUENCE [MRNA]</scope>
</reference>
<reference key="2">
    <citation type="journal article" date="1989" name="Proc. Natl. Acad. Sci. U.S.A.">
        <title>Molecular characterization of sialophorin (CD43), the lymphocyte surface sialoglycoprotein defective in Wiskott-Aldrich syndrome.</title>
        <authorList>
            <person name="Shelley C.S."/>
            <person name="Remold-O'Donnell E."/>
            <person name="Davis A.E. III"/>
            <person name="Bruns G.A.P."/>
            <person name="Rosen F.S."/>
            <person name="Carroll M.C."/>
            <person name="Whitehead D.A.S."/>
        </authorList>
    </citation>
    <scope>NUCLEOTIDE SEQUENCE [MRNA]</scope>
</reference>
<reference key="3">
    <citation type="journal article" date="1990" name="Biochem. J.">
        <title>Structure of the human sialophorin (CD43) gene. Identification of features atypical of genes encoding integral membrane proteins.</title>
        <authorList>
            <person name="Shelley C.S."/>
            <person name="Remold-O'Donnell E."/>
            <person name="Rosen F.S."/>
            <person name="Whitehead D.A.S."/>
        </authorList>
    </citation>
    <scope>NUCLEOTIDE SEQUENCE [GENOMIC DNA]</scope>
</reference>
<reference key="4">
    <citation type="journal article" date="1991" name="J. Biol. Chem.">
        <title>A short, novel promoter sequence confers the expression of human leukosialin, a major sialoglycoprotein on leukocytes.</title>
        <authorList>
            <person name="Kudo S."/>
            <person name="Fukuda M."/>
        </authorList>
    </citation>
    <scope>NUCLEOTIDE SEQUENCE [GENOMIC DNA]</scope>
</reference>
<reference key="5">
    <citation type="journal article" date="2004" name="Nat. Genet.">
        <title>Complete sequencing and characterization of 21,243 full-length human cDNAs.</title>
        <authorList>
            <person name="Ota T."/>
            <person name="Suzuki Y."/>
            <person name="Nishikawa T."/>
            <person name="Otsuki T."/>
            <person name="Sugiyama T."/>
            <person name="Irie R."/>
            <person name="Wakamatsu A."/>
            <person name="Hayashi K."/>
            <person name="Sato H."/>
            <person name="Nagai K."/>
            <person name="Kimura K."/>
            <person name="Makita H."/>
            <person name="Sekine M."/>
            <person name="Obayashi M."/>
            <person name="Nishi T."/>
            <person name="Shibahara T."/>
            <person name="Tanaka T."/>
            <person name="Ishii S."/>
            <person name="Yamamoto J."/>
            <person name="Saito K."/>
            <person name="Kawai Y."/>
            <person name="Isono Y."/>
            <person name="Nakamura Y."/>
            <person name="Nagahari K."/>
            <person name="Murakami K."/>
            <person name="Yasuda T."/>
            <person name="Iwayanagi T."/>
            <person name="Wagatsuma M."/>
            <person name="Shiratori A."/>
            <person name="Sudo H."/>
            <person name="Hosoiri T."/>
            <person name="Kaku Y."/>
            <person name="Kodaira H."/>
            <person name="Kondo H."/>
            <person name="Sugawara M."/>
            <person name="Takahashi M."/>
            <person name="Kanda K."/>
            <person name="Yokoi T."/>
            <person name="Furuya T."/>
            <person name="Kikkawa E."/>
            <person name="Omura Y."/>
            <person name="Abe K."/>
            <person name="Kamihara K."/>
            <person name="Katsuta N."/>
            <person name="Sato K."/>
            <person name="Tanikawa M."/>
            <person name="Yamazaki M."/>
            <person name="Ninomiya K."/>
            <person name="Ishibashi T."/>
            <person name="Yamashita H."/>
            <person name="Murakawa K."/>
            <person name="Fujimori K."/>
            <person name="Tanai H."/>
            <person name="Kimata M."/>
            <person name="Watanabe M."/>
            <person name="Hiraoka S."/>
            <person name="Chiba Y."/>
            <person name="Ishida S."/>
            <person name="Ono Y."/>
            <person name="Takiguchi S."/>
            <person name="Watanabe S."/>
            <person name="Yosida M."/>
            <person name="Hotuta T."/>
            <person name="Kusano J."/>
            <person name="Kanehori K."/>
            <person name="Takahashi-Fujii A."/>
            <person name="Hara H."/>
            <person name="Tanase T.-O."/>
            <person name="Nomura Y."/>
            <person name="Togiya S."/>
            <person name="Komai F."/>
            <person name="Hara R."/>
            <person name="Takeuchi K."/>
            <person name="Arita M."/>
            <person name="Imose N."/>
            <person name="Musashino K."/>
            <person name="Yuuki H."/>
            <person name="Oshima A."/>
            <person name="Sasaki N."/>
            <person name="Aotsuka S."/>
            <person name="Yoshikawa Y."/>
            <person name="Matsunawa H."/>
            <person name="Ichihara T."/>
            <person name="Shiohata N."/>
            <person name="Sano S."/>
            <person name="Moriya S."/>
            <person name="Momiyama H."/>
            <person name="Satoh N."/>
            <person name="Takami S."/>
            <person name="Terashima Y."/>
            <person name="Suzuki O."/>
            <person name="Nakagawa S."/>
            <person name="Senoh A."/>
            <person name="Mizoguchi H."/>
            <person name="Goto Y."/>
            <person name="Shimizu F."/>
            <person name="Wakebe H."/>
            <person name="Hishigaki H."/>
            <person name="Watanabe T."/>
            <person name="Sugiyama A."/>
            <person name="Takemoto M."/>
            <person name="Kawakami B."/>
            <person name="Yamazaki M."/>
            <person name="Watanabe K."/>
            <person name="Kumagai A."/>
            <person name="Itakura S."/>
            <person name="Fukuzumi Y."/>
            <person name="Fujimori Y."/>
            <person name="Komiyama M."/>
            <person name="Tashiro H."/>
            <person name="Tanigami A."/>
            <person name="Fujiwara T."/>
            <person name="Ono T."/>
            <person name="Yamada K."/>
            <person name="Fujii Y."/>
            <person name="Ozaki K."/>
            <person name="Hirao M."/>
            <person name="Ohmori Y."/>
            <person name="Kawabata A."/>
            <person name="Hikiji T."/>
            <person name="Kobatake N."/>
            <person name="Inagaki H."/>
            <person name="Ikema Y."/>
            <person name="Okamoto S."/>
            <person name="Okitani R."/>
            <person name="Kawakami T."/>
            <person name="Noguchi S."/>
            <person name="Itoh T."/>
            <person name="Shigeta K."/>
            <person name="Senba T."/>
            <person name="Matsumura K."/>
            <person name="Nakajima Y."/>
            <person name="Mizuno T."/>
            <person name="Morinaga M."/>
            <person name="Sasaki M."/>
            <person name="Togashi T."/>
            <person name="Oyama M."/>
            <person name="Hata H."/>
            <person name="Watanabe M."/>
            <person name="Komatsu T."/>
            <person name="Mizushima-Sugano J."/>
            <person name="Satoh T."/>
            <person name="Shirai Y."/>
            <person name="Takahashi Y."/>
            <person name="Nakagawa K."/>
            <person name="Okumura K."/>
            <person name="Nagase T."/>
            <person name="Nomura N."/>
            <person name="Kikuchi H."/>
            <person name="Masuho Y."/>
            <person name="Yamashita R."/>
            <person name="Nakai K."/>
            <person name="Yada T."/>
            <person name="Nakamura Y."/>
            <person name="Ohara O."/>
            <person name="Isogai T."/>
            <person name="Sugano S."/>
        </authorList>
    </citation>
    <scope>NUCLEOTIDE SEQUENCE [LARGE SCALE MRNA]</scope>
    <source>
        <tissue>Spleen</tissue>
        <tissue>Thymus</tissue>
    </source>
</reference>
<reference key="6">
    <citation type="submission" date="2005-07" db="EMBL/GenBank/DDBJ databases">
        <authorList>
            <person name="Mural R.J."/>
            <person name="Istrail S."/>
            <person name="Sutton G."/>
            <person name="Florea L."/>
            <person name="Halpern A.L."/>
            <person name="Mobarry C.M."/>
            <person name="Lippert R."/>
            <person name="Walenz B."/>
            <person name="Shatkay H."/>
            <person name="Dew I."/>
            <person name="Miller J.R."/>
            <person name="Flanigan M.J."/>
            <person name="Edwards N.J."/>
            <person name="Bolanos R."/>
            <person name="Fasulo D."/>
            <person name="Halldorsson B.V."/>
            <person name="Hannenhalli S."/>
            <person name="Turner R."/>
            <person name="Yooseph S."/>
            <person name="Lu F."/>
            <person name="Nusskern D.R."/>
            <person name="Shue B.C."/>
            <person name="Zheng X.H."/>
            <person name="Zhong F."/>
            <person name="Delcher A.L."/>
            <person name="Huson D.H."/>
            <person name="Kravitz S.A."/>
            <person name="Mouchard L."/>
            <person name="Reinert K."/>
            <person name="Remington K.A."/>
            <person name="Clark A.G."/>
            <person name="Waterman M.S."/>
            <person name="Eichler E.E."/>
            <person name="Adams M.D."/>
            <person name="Hunkapiller M.W."/>
            <person name="Myers E.W."/>
            <person name="Venter J.C."/>
        </authorList>
    </citation>
    <scope>NUCLEOTIDE SEQUENCE [LARGE SCALE GENOMIC DNA]</scope>
</reference>
<reference key="7">
    <citation type="journal article" date="2004" name="Genome Res.">
        <title>The status, quality, and expansion of the NIH full-length cDNA project: the Mammalian Gene Collection (MGC).</title>
        <authorList>
            <consortium name="The MGC Project Team"/>
        </authorList>
    </citation>
    <scope>NUCLEOTIDE SEQUENCE [LARGE SCALE MRNA]</scope>
    <source>
        <tissue>Kidney</tissue>
    </source>
</reference>
<reference key="8">
    <citation type="journal article" date="1992" name="Proc. Natl. Acad. Sci. U.S.A.">
        <title>Amino acid sequence of human plasma galactoglycoprotein: identity with the extracellular region of CD43 (sialophorin).</title>
        <authorList>
            <person name="Schmid K."/>
            <person name="Hediger M.A."/>
            <person name="Brossmer R."/>
            <person name="Collins J.H."/>
            <person name="Haupt H."/>
            <person name="Marti T."/>
            <person name="Offner G.D."/>
            <person name="Schaller J."/>
            <person name="Takagaki K."/>
            <person name="Walsh M.T."/>
            <person name="Schwick H.G."/>
            <person name="Rose F.S."/>
            <person name="Remold-O'Donnell E."/>
        </authorList>
    </citation>
    <scope>PROTEIN SEQUENCE OF 20-245</scope>
    <scope>GLYCOSYLATION AT THR-21; THR-22; THR-26; THR-28; SER-29; SER-35; THR-36; SER-37; SER-41; SER-42; THR-46; THR-47; SER-48; THR-50; THR-58; THR-69; SER-99; SER-103; THR-109; THR-113; SER-114; THR-136; THR-137; THR-173; THR-178 AND ASN-239</scope>
</reference>
<reference key="9">
    <citation type="journal article" date="1986" name="J. Biol. Chem.">
        <title>Purification and chemical composition of gpL115, the human lymphocyte surface sialoglycoprotein that is defective in Wiskott-Aldrich syndrome.</title>
        <authorList>
            <person name="Remold-O'Donnell E."/>
            <person name="Davis A.E. III"/>
            <person name="Kenney D."/>
            <person name="Bhaskar K.R."/>
            <person name="Rosen F.S."/>
        </authorList>
    </citation>
    <scope>CHARACTERIZATION</scope>
</reference>
<reference key="10">
    <citation type="journal article" date="1989" name="J. Biol. Chem.">
        <title>Phosphorylation of the major leukocyte surface sialoglycoprotein, leukosialin, is increased by phorbol 12-myristate 13-acetate.</title>
        <authorList>
            <person name="Piller V."/>
            <person name="Piller F."/>
            <person name="Fukuda M."/>
        </authorList>
    </citation>
    <scope>PHOSPHORYLATION AT SER-291 AND SER-351</scope>
</reference>
<reference key="11">
    <citation type="journal article" date="2004" name="Biochem. Biophys. Res. Commun.">
        <title>CD43 has a functional NLS, interacts with beta-catenin, and affects gene expression.</title>
        <authorList>
            <person name="Andersson C.X."/>
            <person name="Fernandez-Rodriguez J."/>
            <person name="Laos S."/>
            <person name="Sikut R."/>
            <person name="Sikut A."/>
            <person name="Baeckstroem D."/>
            <person name="Hansson G.C."/>
        </authorList>
    </citation>
    <scope>SUBCELLULAR LOCATION</scope>
    <scope>INTERACTION WITH CTNNB1</scope>
    <scope>NUCLEAR LOCALIZATION SIGNAL</scope>
    <scope>MUTAGENESIS OF 282-LYS-ARG-283 AND 295-LYS-ARG-296</scope>
</reference>
<reference key="12">
    <citation type="journal article" date="2005" name="Biochem. J.">
        <title>Shedding and gamma-secretase-mediated intramembrane proteolysis of the mucin-type molecule CD43.</title>
        <authorList>
            <person name="Andersson C.X."/>
            <person name="Fernandez-Rodriguez J."/>
            <person name="Laos S."/>
            <person name="Baeckstroem D."/>
            <person name="Haass C."/>
            <person name="Hansson G.C."/>
        </authorList>
    </citation>
    <scope>PROTEOLYTIC PROCESSING</scope>
</reference>
<reference key="13">
    <citation type="journal article" date="2007" name="BMC Immunol.">
        <title>CD43 signals induce type one lineage commitment of human CD4+ T cells.</title>
        <authorList>
            <person name="Ramirez-Pliego O."/>
            <person name="Escobar-Zarate D.L."/>
            <person name="Rivera-Martinez G.M."/>
            <person name="Cervantes-Badillo M.G."/>
            <person name="Esquivel-Guadarrama F.R."/>
            <person name="Rosas-Salgado G."/>
            <person name="Rosenstein Y."/>
            <person name="Santana M.A."/>
        </authorList>
    </citation>
    <scope>FUNCTION</scope>
</reference>
<reference key="14">
    <citation type="journal article" date="2008" name="J. Biol. Chem.">
        <title>The cleavage of neutrophil leukosialin (CD43) by cathepsin G releases its extracellular domain and triggers its intramembrane proteolysis by presenilin/gamma-secretase.</title>
        <authorList>
            <person name="Mambole A."/>
            <person name="Baruch D."/>
            <person name="Nusbaum P."/>
            <person name="Bigot S."/>
            <person name="Suzuki M."/>
            <person name="Lesavre P."/>
            <person name="Fukuda M."/>
            <person name="Halbwachs-Mecarelli L."/>
        </authorList>
    </citation>
    <scope>PROTEOLYTIC PROCESSING</scope>
</reference>
<reference key="15">
    <citation type="journal article" date="2008" name="J. Proteome Res.">
        <title>Phosphorylation analysis of primary human T lymphocytes using sequential IMAC and titanium oxide enrichment.</title>
        <authorList>
            <person name="Carrascal M."/>
            <person name="Ovelleiro D."/>
            <person name="Casas V."/>
            <person name="Gay M."/>
            <person name="Abian J."/>
        </authorList>
    </citation>
    <scope>IDENTIFICATION BY MASS SPECTROMETRY [LARGE SCALE ANALYSIS]</scope>
    <source>
        <tissue>T-cell</tissue>
    </source>
</reference>
<reference key="16">
    <citation type="journal article" date="2008" name="J. Proteome Res.">
        <title>Phosphoproteome of resting human platelets.</title>
        <authorList>
            <person name="Zahedi R.P."/>
            <person name="Lewandrowski U."/>
            <person name="Wiesner J."/>
            <person name="Wortelkamp S."/>
            <person name="Moebius J."/>
            <person name="Schuetz C."/>
            <person name="Walter U."/>
            <person name="Gambaryan S."/>
            <person name="Sickmann A."/>
        </authorList>
    </citation>
    <scope>PHOSPHORYLATION [LARGE SCALE ANALYSIS] AT SER-355</scope>
    <scope>IDENTIFICATION BY MASS SPECTROMETRY [LARGE SCALE ANALYSIS]</scope>
    <source>
        <tissue>Platelet</tissue>
    </source>
</reference>
<reference key="17">
    <citation type="journal article" date="2009" name="Sci. Signal.">
        <title>Quantitative phosphoproteomic analysis of T cell receptor signaling reveals system-wide modulation of protein-protein interactions.</title>
        <authorList>
            <person name="Mayya V."/>
            <person name="Lundgren D.H."/>
            <person name="Hwang S.-I."/>
            <person name="Rezaul K."/>
            <person name="Wu L."/>
            <person name="Eng J.K."/>
            <person name="Rodionov V."/>
            <person name="Han D.K."/>
        </authorList>
    </citation>
    <scope>PHOSPHORYLATION [LARGE SCALE ANALYSIS] AT SER-368</scope>
    <scope>IDENTIFICATION BY MASS SPECTROMETRY [LARGE SCALE ANALYSIS]</scope>
    <source>
        <tissue>Leukemic T-cell</tissue>
    </source>
</reference>
<reference key="18">
    <citation type="journal article" date="2011" name="BMC Syst. Biol.">
        <title>Initial characterization of the human central proteome.</title>
        <authorList>
            <person name="Burkard T.R."/>
            <person name="Planyavsky M."/>
            <person name="Kaupe I."/>
            <person name="Breitwieser F.P."/>
            <person name="Buerckstuemmer T."/>
            <person name="Bennett K.L."/>
            <person name="Superti-Furga G."/>
            <person name="Colinge J."/>
        </authorList>
    </citation>
    <scope>IDENTIFICATION BY MASS SPECTROMETRY [LARGE SCALE ANALYSIS]</scope>
</reference>
<reference key="19">
    <citation type="journal article" date="2013" name="J. Proteome Res.">
        <title>Toward a comprehensive characterization of a human cancer cell phosphoproteome.</title>
        <authorList>
            <person name="Zhou H."/>
            <person name="Di Palma S."/>
            <person name="Preisinger C."/>
            <person name="Peng M."/>
            <person name="Polat A.N."/>
            <person name="Heck A.J."/>
            <person name="Mohammed S."/>
        </authorList>
    </citation>
    <scope>PHOSPHORYLATION [LARGE SCALE ANALYSIS] AT SER-291; SER-336; THR-341; SER-351 AND SER-355</scope>
    <scope>IDENTIFICATION BY MASS SPECTROMETRY [LARGE SCALE ANALYSIS]</scope>
    <source>
        <tissue>Erythroleukemia</tissue>
    </source>
</reference>
<reference key="20">
    <citation type="journal article" date="2014" name="J. Cell. Physiol.">
        <title>CD43 signals prepare human T cells to receive cytokine differentiation signals.</title>
        <authorList>
            <person name="Galindo-Albarran A.O."/>
            <person name="Ramirez-Pliego O."/>
            <person name="Labastida-Conde R.G."/>
            <person name="Melchy-Perez E.I."/>
            <person name="Liquitaya-Montiel A."/>
            <person name="Esquivel-Guadarrama F.R."/>
            <person name="Rosas-Salgado G."/>
            <person name="Rosenstein Y."/>
            <person name="Santana M.A."/>
        </authorList>
    </citation>
    <scope>FUNCTION</scope>
</reference>
<reference key="21">
    <citation type="journal article" date="2015" name="Proteomics">
        <title>N-terminome analysis of the human mitochondrial proteome.</title>
        <authorList>
            <person name="Vaca Jacome A.S."/>
            <person name="Rabilloud T."/>
            <person name="Schaeffer-Reiss C."/>
            <person name="Rompais M."/>
            <person name="Ayoub D."/>
            <person name="Lane L."/>
            <person name="Bairoch A."/>
            <person name="Van Dorsselaer A."/>
            <person name="Carapito C."/>
        </authorList>
    </citation>
    <scope>IDENTIFICATION BY MASS SPECTROMETRY [LARGE SCALE ANALYSIS]</scope>
</reference>
<feature type="signal peptide" evidence="7">
    <location>
        <begin position="1"/>
        <end position="19"/>
    </location>
</feature>
<feature type="chain" id="PRO_0000021588" description="Leukosialin">
    <location>
        <begin position="20"/>
        <end position="400"/>
    </location>
</feature>
<feature type="chain" id="PRO_0000443406" description="CD43 cytoplasmic tail" evidence="2">
    <location>
        <begin position="277"/>
        <end position="400"/>
    </location>
</feature>
<feature type="topological domain" description="Extracellular" evidence="3">
    <location>
        <begin position="20"/>
        <end position="253"/>
    </location>
</feature>
<feature type="transmembrane region" description="Helical" evidence="3">
    <location>
        <begin position="254"/>
        <end position="276"/>
    </location>
</feature>
<feature type="topological domain" description="Cytoplasmic" evidence="3">
    <location>
        <begin position="277"/>
        <end position="400"/>
    </location>
</feature>
<feature type="region of interest" description="Disordered" evidence="4">
    <location>
        <begin position="21"/>
        <end position="224"/>
    </location>
</feature>
<feature type="region of interest" description="Required for interaction with EZR, MSN and RDX and for co-localization to microvilli" evidence="1">
    <location>
        <begin position="278"/>
        <end position="308"/>
    </location>
</feature>
<feature type="region of interest" description="Disordered" evidence="4">
    <location>
        <begin position="320"/>
        <end position="400"/>
    </location>
</feature>
<feature type="short sequence motif" description="Nuclear localization signal" evidence="5">
    <location>
        <begin position="282"/>
        <end position="296"/>
    </location>
</feature>
<feature type="compositionally biased region" description="Polar residues" evidence="4">
    <location>
        <begin position="21"/>
        <end position="51"/>
    </location>
</feature>
<feature type="compositionally biased region" description="Polar residues" evidence="4">
    <location>
        <begin position="58"/>
        <end position="112"/>
    </location>
</feature>
<feature type="compositionally biased region" description="Polar residues" evidence="4">
    <location>
        <begin position="121"/>
        <end position="164"/>
    </location>
</feature>
<feature type="compositionally biased region" description="Polar residues" evidence="4">
    <location>
        <begin position="172"/>
        <end position="182"/>
    </location>
</feature>
<feature type="compositionally biased region" description="Low complexity" evidence="4">
    <location>
        <begin position="196"/>
        <end position="211"/>
    </location>
</feature>
<feature type="compositionally biased region" description="Polar residues" evidence="4">
    <location>
        <begin position="212"/>
        <end position="224"/>
    </location>
</feature>
<feature type="compositionally biased region" description="Gly residues" evidence="4">
    <location>
        <begin position="320"/>
        <end position="332"/>
    </location>
</feature>
<feature type="modified residue" description="Phosphoserine" evidence="11 16">
    <location>
        <position position="291"/>
    </location>
</feature>
<feature type="modified residue" description="Phosphoserine" evidence="16">
    <location>
        <position position="336"/>
    </location>
</feature>
<feature type="modified residue" description="Phosphothreonine" evidence="16">
    <location>
        <position position="341"/>
    </location>
</feature>
<feature type="modified residue" description="Phosphoserine" evidence="11 16">
    <location>
        <position position="351"/>
    </location>
</feature>
<feature type="modified residue" description="Phosphoserine; by PKC/PRKCQ" evidence="14 16">
    <location>
        <position position="355"/>
    </location>
</feature>
<feature type="modified residue" description="Phosphoserine" evidence="15">
    <location>
        <position position="368"/>
    </location>
</feature>
<feature type="modified residue" description="Phosphoserine" evidence="2">
    <location>
        <position position="379"/>
    </location>
</feature>
<feature type="glycosylation site" description="O-linked (GalNAc...) threonine" evidence="7">
    <location>
        <position position="21"/>
    </location>
</feature>
<feature type="glycosylation site" description="O-linked (GalNAc...) threonine" evidence="7">
    <location>
        <position position="22"/>
    </location>
</feature>
<feature type="glycosylation site" description="O-linked (GalNAc...) threonine" evidence="7">
    <location>
        <position position="26"/>
    </location>
</feature>
<feature type="glycosylation site" description="O-linked (GalNAc...) threonine" evidence="7">
    <location>
        <position position="28"/>
    </location>
</feature>
<feature type="glycosylation site" description="O-linked (GalNAc...) serine" evidence="7">
    <location>
        <position position="29"/>
    </location>
</feature>
<feature type="glycosylation site" description="O-linked (GalNAc...) serine" evidence="7">
    <location>
        <position position="35"/>
    </location>
</feature>
<feature type="glycosylation site" description="O-linked (GalNAc...) threonine" evidence="7">
    <location>
        <position position="36"/>
    </location>
</feature>
<feature type="glycosylation site" description="O-linked (GalNAc...) serine" evidence="7">
    <location>
        <position position="37"/>
    </location>
</feature>
<feature type="glycosylation site" description="O-linked (GalNAc...) serine" evidence="7">
    <location>
        <position position="41"/>
    </location>
</feature>
<feature type="glycosylation site" description="O-linked (GalNAc...) serine" evidence="7">
    <location>
        <position position="42"/>
    </location>
</feature>
<feature type="glycosylation site" description="O-linked (GalNAc...) threonine" evidence="7">
    <location>
        <position position="46"/>
    </location>
</feature>
<feature type="glycosylation site" description="O-linked (GalNAc...) threonine" evidence="7">
    <location>
        <position position="47"/>
    </location>
</feature>
<feature type="glycosylation site" description="O-linked (GalNAc...) serine" evidence="7">
    <location>
        <position position="48"/>
    </location>
</feature>
<feature type="glycosylation site" description="O-linked (GalNAc...) threonine" evidence="7">
    <location>
        <position position="50"/>
    </location>
</feature>
<feature type="glycosylation site" description="O-linked (GalNAc...) threonine" evidence="7">
    <location>
        <position position="58"/>
    </location>
</feature>
<feature type="glycosylation site" description="O-linked (GalNAc...) threonine" evidence="7">
    <location>
        <position position="69"/>
    </location>
</feature>
<feature type="glycosylation site" description="O-linked (GalNAc...) serine" evidence="7">
    <location>
        <position position="99"/>
    </location>
</feature>
<feature type="glycosylation site" description="O-linked (GalNAc...) serine" evidence="7">
    <location>
        <position position="103"/>
    </location>
</feature>
<feature type="glycosylation site" description="O-linked (GalNAc...) threonine" evidence="7">
    <location>
        <position position="109"/>
    </location>
</feature>
<feature type="glycosylation site" description="O-linked (GalNAc...) threonine" evidence="7">
    <location>
        <position position="113"/>
    </location>
</feature>
<feature type="glycosylation site" description="O-linked (GalNAc...) serine" evidence="7">
    <location>
        <position position="114"/>
    </location>
</feature>
<feature type="glycosylation site" description="O-linked (GalNAc...) threonine" evidence="7">
    <location>
        <position position="136"/>
    </location>
</feature>
<feature type="glycosylation site" description="O-linked (GalNAc...) threonine" evidence="7">
    <location>
        <position position="137"/>
    </location>
</feature>
<feature type="glycosylation site" description="O-linked (GalNAc...) threonine" evidence="7">
    <location>
        <position position="173"/>
    </location>
</feature>
<feature type="glycosylation site" description="O-linked (GalNAc...) threonine" evidence="7">
    <location>
        <position position="178"/>
    </location>
</feature>
<feature type="glycosylation site" description="N-linked (GlcNAc...) asparagine" evidence="7">
    <location>
        <position position="239"/>
    </location>
</feature>
<feature type="sequence variant" id="VAR_051091" description="In dbSNP:rs2229653.">
    <original>T</original>
    <variation>I</variation>
    <location>
        <position position="22"/>
    </location>
</feature>
<feature type="sequence variant" id="VAR_051092" description="In dbSNP:rs2229654.">
    <original>T</original>
    <variation>A</variation>
    <location>
        <position position="93"/>
    </location>
</feature>
<feature type="mutagenesis site" description="Reduced nuclear localization. Loss of nuclear localization; when associated with 295-P-G-296." evidence="5">
    <original>KR</original>
    <variation>PG</variation>
    <location>
        <begin position="282"/>
        <end position="283"/>
    </location>
</feature>
<feature type="mutagenesis site" description="Reduced nuclear localization. Loss of nuclear localization; when associated with 282-P-G-283." evidence="5">
    <original>KR</original>
    <variation>PG</variation>
    <location>
        <begin position="295"/>
        <end position="296"/>
    </location>
</feature>
<evidence type="ECO:0000250" key="1">
    <source>
        <dbReference type="UniProtKB" id="P13838"/>
    </source>
</evidence>
<evidence type="ECO:0000250" key="2">
    <source>
        <dbReference type="UniProtKB" id="P15702"/>
    </source>
</evidence>
<evidence type="ECO:0000255" key="3"/>
<evidence type="ECO:0000256" key="4">
    <source>
        <dbReference type="SAM" id="MobiDB-lite"/>
    </source>
</evidence>
<evidence type="ECO:0000269" key="5">
    <source>
    </source>
</evidence>
<evidence type="ECO:0000269" key="6">
    <source>
    </source>
</evidence>
<evidence type="ECO:0000269" key="7">
    <source>
    </source>
</evidence>
<evidence type="ECO:0000269" key="8">
    <source>
    </source>
</evidence>
<evidence type="ECO:0000269" key="9">
    <source>
    </source>
</evidence>
<evidence type="ECO:0000269" key="10">
    <source>
    </source>
</evidence>
<evidence type="ECO:0000269" key="11">
    <source>
    </source>
</evidence>
<evidence type="ECO:0000303" key="12">
    <source>
    </source>
</evidence>
<evidence type="ECO:0000303" key="13">
    <source>
    </source>
</evidence>
<evidence type="ECO:0007744" key="14">
    <source>
    </source>
</evidence>
<evidence type="ECO:0007744" key="15">
    <source>
    </source>
</evidence>
<evidence type="ECO:0007744" key="16">
    <source>
    </source>
</evidence>
<keyword id="KW-0966">Cell projection</keyword>
<keyword id="KW-0903">Direct protein sequencing</keyword>
<keyword id="KW-0325">Glycoprotein</keyword>
<keyword id="KW-0472">Membrane</keyword>
<keyword id="KW-0539">Nucleus</keyword>
<keyword id="KW-0597">Phosphoprotein</keyword>
<keyword id="KW-1267">Proteomics identification</keyword>
<keyword id="KW-1185">Reference proteome</keyword>
<keyword id="KW-0732">Signal</keyword>
<keyword id="KW-0812">Transmembrane</keyword>
<keyword id="KW-1133">Transmembrane helix</keyword>
<keyword id="KW-0832">Ubl conjugation</keyword>
<proteinExistence type="evidence at protein level"/>
<dbReference type="EMBL" id="J04168">
    <property type="protein sequence ID" value="AAA59510.1"/>
    <property type="molecule type" value="mRNA"/>
</dbReference>
<dbReference type="EMBL" id="J04536">
    <property type="protein sequence ID" value="AAB59540.1"/>
    <property type="molecule type" value="mRNA"/>
</dbReference>
<dbReference type="EMBL" id="X52075">
    <property type="protein sequence ID" value="CAA36294.1"/>
    <property type="molecule type" value="Genomic_DNA"/>
</dbReference>
<dbReference type="EMBL" id="M61827">
    <property type="protein sequence ID" value="AAA51949.1"/>
    <property type="molecule type" value="Genomic_DNA"/>
</dbReference>
<dbReference type="EMBL" id="AK292626">
    <property type="protein sequence ID" value="BAF85315.1"/>
    <property type="molecule type" value="mRNA"/>
</dbReference>
<dbReference type="EMBL" id="AK313750">
    <property type="protein sequence ID" value="BAG36490.1"/>
    <property type="molecule type" value="mRNA"/>
</dbReference>
<dbReference type="EMBL" id="CH471238">
    <property type="protein sequence ID" value="EAW80015.1"/>
    <property type="molecule type" value="Genomic_DNA"/>
</dbReference>
<dbReference type="EMBL" id="BC012350">
    <property type="protein sequence ID" value="AAH12350.1"/>
    <property type="molecule type" value="mRNA"/>
</dbReference>
<dbReference type="CCDS" id="CCDS10650.1"/>
<dbReference type="PIR" id="A39822">
    <property type="entry name" value="A39822"/>
</dbReference>
<dbReference type="RefSeq" id="NP_001025459.1">
    <property type="nucleotide sequence ID" value="NM_001030288.4"/>
</dbReference>
<dbReference type="RefSeq" id="NP_003114.1">
    <property type="nucleotide sequence ID" value="NM_003123.6"/>
</dbReference>
<dbReference type="BioGRID" id="112571">
    <property type="interactions" value="56"/>
</dbReference>
<dbReference type="FunCoup" id="P16150">
    <property type="interactions" value="208"/>
</dbReference>
<dbReference type="IntAct" id="P16150">
    <property type="interactions" value="44"/>
</dbReference>
<dbReference type="STRING" id="9606.ENSP00000498852"/>
<dbReference type="GlyConnect" id="340">
    <property type="glycosylation" value="11 O-Linked glycans"/>
</dbReference>
<dbReference type="GlyCosmos" id="P16150">
    <property type="glycosylation" value="29 sites, 17 glycans"/>
</dbReference>
<dbReference type="GlyGen" id="P16150">
    <property type="glycosylation" value="31 sites, 16 O-linked glycans (29 sites)"/>
</dbReference>
<dbReference type="iPTMnet" id="P16150"/>
<dbReference type="PhosphoSitePlus" id="P16150"/>
<dbReference type="BioMuta" id="SPN"/>
<dbReference type="DMDM" id="126213"/>
<dbReference type="MassIVE" id="P16150"/>
<dbReference type="PaxDb" id="9606-ENSP00000353238"/>
<dbReference type="PeptideAtlas" id="P16150"/>
<dbReference type="ProteomicsDB" id="53297"/>
<dbReference type="Pumba" id="P16150"/>
<dbReference type="Antibodypedia" id="3627">
    <property type="antibodies" value="2347 antibodies from 48 providers"/>
</dbReference>
<dbReference type="DNASU" id="6693"/>
<dbReference type="Ensembl" id="ENST00000360121.4">
    <property type="protein sequence ID" value="ENSP00000353238.3"/>
    <property type="gene ID" value="ENSG00000197471.12"/>
</dbReference>
<dbReference type="Ensembl" id="ENST00000395389.2">
    <property type="protein sequence ID" value="ENSP00000378787.2"/>
    <property type="gene ID" value="ENSG00000197471.12"/>
</dbReference>
<dbReference type="Ensembl" id="ENST00000563039.2">
    <property type="protein sequence ID" value="ENSP00000455266.1"/>
    <property type="gene ID" value="ENSG00000197471.12"/>
</dbReference>
<dbReference type="Ensembl" id="ENST00000652691.1">
    <property type="protein sequence ID" value="ENSP00000498852.1"/>
    <property type="gene ID" value="ENSG00000197471.12"/>
</dbReference>
<dbReference type="GeneID" id="6693"/>
<dbReference type="KEGG" id="hsa:6693"/>
<dbReference type="MANE-Select" id="ENST00000652691.1">
    <property type="protein sequence ID" value="ENSP00000498852.1"/>
    <property type="RefSeq nucleotide sequence ID" value="NM_003123.6"/>
    <property type="RefSeq protein sequence ID" value="NP_003114.1"/>
</dbReference>
<dbReference type="UCSC" id="uc002dtm.5">
    <property type="organism name" value="human"/>
</dbReference>
<dbReference type="AGR" id="HGNC:11249"/>
<dbReference type="CTD" id="6693"/>
<dbReference type="DisGeNET" id="6693"/>
<dbReference type="GeneCards" id="SPN"/>
<dbReference type="HGNC" id="HGNC:11249">
    <property type="gene designation" value="SPN"/>
</dbReference>
<dbReference type="HPA" id="ENSG00000197471">
    <property type="expression patterns" value="Group enriched (bone marrow, lung, lymphoid tissue)"/>
</dbReference>
<dbReference type="MalaCards" id="SPN"/>
<dbReference type="MIM" id="182160">
    <property type="type" value="gene"/>
</dbReference>
<dbReference type="neXtProt" id="NX_P16150"/>
<dbReference type="OpenTargets" id="ENSG00000197471"/>
<dbReference type="PharmGKB" id="PA36079"/>
<dbReference type="VEuPathDB" id="HostDB:ENSG00000197471"/>
<dbReference type="eggNOG" id="ENOG502SBHY">
    <property type="taxonomic scope" value="Eukaryota"/>
</dbReference>
<dbReference type="GeneTree" id="ENSGT00390000017626"/>
<dbReference type="HOGENOM" id="CLU_038831_0_1_1"/>
<dbReference type="InParanoid" id="P16150"/>
<dbReference type="OMA" id="FKMSSMP"/>
<dbReference type="OrthoDB" id="9666309at2759"/>
<dbReference type="PAN-GO" id="P16150">
    <property type="GO annotations" value="5 GO annotations based on evolutionary models"/>
</dbReference>
<dbReference type="PhylomeDB" id="P16150"/>
<dbReference type="TreeFam" id="TF337688"/>
<dbReference type="PathwayCommons" id="P16150"/>
<dbReference type="Reactome" id="R-HSA-202733">
    <property type="pathway name" value="Cell surface interactions at the vascular wall"/>
</dbReference>
<dbReference type="Reactome" id="R-HSA-210991">
    <property type="pathway name" value="Basigin interactions"/>
</dbReference>
<dbReference type="SignaLink" id="P16150"/>
<dbReference type="BioGRID-ORCS" id="6693">
    <property type="hits" value="25 hits in 1156 CRISPR screens"/>
</dbReference>
<dbReference type="ChiTaRS" id="SPN">
    <property type="organism name" value="human"/>
</dbReference>
<dbReference type="GeneWiki" id="CD43"/>
<dbReference type="GenomeRNAi" id="6693"/>
<dbReference type="Pharos" id="P16150">
    <property type="development level" value="Tbio"/>
</dbReference>
<dbReference type="PRO" id="PR:P16150"/>
<dbReference type="Proteomes" id="UP000005640">
    <property type="component" value="Chromosome 16"/>
</dbReference>
<dbReference type="RNAct" id="P16150">
    <property type="molecule type" value="protein"/>
</dbReference>
<dbReference type="Bgee" id="ENSG00000197471">
    <property type="expression patterns" value="Expressed in buccal mucosa cell and 184 other cell types or tissues"/>
</dbReference>
<dbReference type="ExpressionAtlas" id="P16150">
    <property type="expression patterns" value="baseline and differential"/>
</dbReference>
<dbReference type="GO" id="GO:0005604">
    <property type="term" value="C:basement membrane"/>
    <property type="evidence" value="ECO:0007669"/>
    <property type="project" value="Ensembl"/>
</dbReference>
<dbReference type="GO" id="GO:0009986">
    <property type="term" value="C:cell surface"/>
    <property type="evidence" value="ECO:0000314"/>
    <property type="project" value="UniProtKB"/>
</dbReference>
<dbReference type="GO" id="GO:0009897">
    <property type="term" value="C:external side of plasma membrane"/>
    <property type="evidence" value="ECO:0000318"/>
    <property type="project" value="GO_Central"/>
</dbReference>
<dbReference type="GO" id="GO:0070062">
    <property type="term" value="C:extracellular exosome"/>
    <property type="evidence" value="ECO:0007005"/>
    <property type="project" value="UniProtKB"/>
</dbReference>
<dbReference type="GO" id="GO:0005615">
    <property type="term" value="C:extracellular space"/>
    <property type="evidence" value="ECO:0000314"/>
    <property type="project" value="MGI"/>
</dbReference>
<dbReference type="GO" id="GO:0016020">
    <property type="term" value="C:membrane"/>
    <property type="evidence" value="ECO:0007005"/>
    <property type="project" value="UniProtKB"/>
</dbReference>
<dbReference type="GO" id="GO:0005902">
    <property type="term" value="C:microvillus"/>
    <property type="evidence" value="ECO:0000250"/>
    <property type="project" value="UniProtKB"/>
</dbReference>
<dbReference type="GO" id="GO:0005886">
    <property type="term" value="C:plasma membrane"/>
    <property type="evidence" value="ECO:0000304"/>
    <property type="project" value="Reactome"/>
</dbReference>
<dbReference type="GO" id="GO:0016605">
    <property type="term" value="C:PML body"/>
    <property type="evidence" value="ECO:0007669"/>
    <property type="project" value="UniProtKB-SubCell"/>
</dbReference>
<dbReference type="GO" id="GO:0001931">
    <property type="term" value="C:uropod"/>
    <property type="evidence" value="ECO:0000250"/>
    <property type="project" value="UniProtKB"/>
</dbReference>
<dbReference type="GO" id="GO:0031072">
    <property type="term" value="F:heat shock protein binding"/>
    <property type="evidence" value="ECO:0000353"/>
    <property type="project" value="CAFA"/>
</dbReference>
<dbReference type="GO" id="GO:0030544">
    <property type="term" value="F:Hsp70 protein binding"/>
    <property type="evidence" value="ECO:0000353"/>
    <property type="project" value="CAFA"/>
</dbReference>
<dbReference type="GO" id="GO:0004888">
    <property type="term" value="F:transmembrane signaling receptor activity"/>
    <property type="evidence" value="ECO:0000304"/>
    <property type="project" value="ProtInc"/>
</dbReference>
<dbReference type="GO" id="GO:0097190">
    <property type="term" value="P:apoptotic signaling pathway"/>
    <property type="evidence" value="ECO:0007669"/>
    <property type="project" value="Ensembl"/>
</dbReference>
<dbReference type="GO" id="GO:0007166">
    <property type="term" value="P:cell surface receptor signaling pathway"/>
    <property type="evidence" value="ECO:0000318"/>
    <property type="project" value="GO_Central"/>
</dbReference>
<dbReference type="GO" id="GO:0006968">
    <property type="term" value="P:cellular defense response"/>
    <property type="evidence" value="ECO:0000304"/>
    <property type="project" value="ProtInc"/>
</dbReference>
<dbReference type="GO" id="GO:0006935">
    <property type="term" value="P:chemotaxis"/>
    <property type="evidence" value="ECO:0000304"/>
    <property type="project" value="ProtInc"/>
</dbReference>
<dbReference type="GO" id="GO:0042742">
    <property type="term" value="P:defense response to bacterium"/>
    <property type="evidence" value="ECO:0000314"/>
    <property type="project" value="MGI"/>
</dbReference>
<dbReference type="GO" id="GO:0007163">
    <property type="term" value="P:establishment or maintenance of cell polarity"/>
    <property type="evidence" value="ECO:0000304"/>
    <property type="project" value="ProtInc"/>
</dbReference>
<dbReference type="GO" id="GO:0006955">
    <property type="term" value="P:immune response"/>
    <property type="evidence" value="ECO:0000304"/>
    <property type="project" value="ProtInc"/>
</dbReference>
<dbReference type="GO" id="GO:0050901">
    <property type="term" value="P:leukocyte tethering or rolling"/>
    <property type="evidence" value="ECO:0000250"/>
    <property type="project" value="UniProtKB"/>
</dbReference>
<dbReference type="GO" id="GO:0007162">
    <property type="term" value="P:negative regulation of cell adhesion"/>
    <property type="evidence" value="ECO:0000304"/>
    <property type="project" value="ProtInc"/>
</dbReference>
<dbReference type="GO" id="GO:0042130">
    <property type="term" value="P:negative regulation of T cell proliferation"/>
    <property type="evidence" value="ECO:0000250"/>
    <property type="project" value="UniProtKB"/>
</dbReference>
<dbReference type="GO" id="GO:0001808">
    <property type="term" value="P:negative regulation of type IV hypersensitivity"/>
    <property type="evidence" value="ECO:0007669"/>
    <property type="project" value="Ensembl"/>
</dbReference>
<dbReference type="GO" id="GO:0045060">
    <property type="term" value="P:negative thymic T cell selection"/>
    <property type="evidence" value="ECO:0007669"/>
    <property type="project" value="Ensembl"/>
</dbReference>
<dbReference type="GO" id="GO:2000406">
    <property type="term" value="P:positive regulation of T cell migration"/>
    <property type="evidence" value="ECO:0000250"/>
    <property type="project" value="UniProtKB"/>
</dbReference>
<dbReference type="GO" id="GO:0042102">
    <property type="term" value="P:positive regulation of T cell proliferation"/>
    <property type="evidence" value="ECO:0007669"/>
    <property type="project" value="Ensembl"/>
</dbReference>
<dbReference type="GO" id="GO:0032760">
    <property type="term" value="P:positive regulation of tumor necrosis factor production"/>
    <property type="evidence" value="ECO:0000314"/>
    <property type="project" value="MGI"/>
</dbReference>
<dbReference type="GO" id="GO:0050688">
    <property type="term" value="P:regulation of defense response to virus"/>
    <property type="evidence" value="ECO:0007669"/>
    <property type="project" value="Ensembl"/>
</dbReference>
<dbReference type="GO" id="GO:0050776">
    <property type="term" value="P:regulation of immune response"/>
    <property type="evidence" value="ECO:0000318"/>
    <property type="project" value="GO_Central"/>
</dbReference>
<dbReference type="GO" id="GO:2000404">
    <property type="term" value="P:regulation of T cell migration"/>
    <property type="evidence" value="ECO:0000250"/>
    <property type="project" value="UniProtKB"/>
</dbReference>
<dbReference type="GO" id="GO:0001562">
    <property type="term" value="P:response to protozoan"/>
    <property type="evidence" value="ECO:0007669"/>
    <property type="project" value="Ensembl"/>
</dbReference>
<dbReference type="GO" id="GO:0007165">
    <property type="term" value="P:signal transduction"/>
    <property type="evidence" value="ECO:0000304"/>
    <property type="project" value="ProtInc"/>
</dbReference>
<dbReference type="GO" id="GO:0031295">
    <property type="term" value="P:T cell costimulation"/>
    <property type="evidence" value="ECO:0007669"/>
    <property type="project" value="Ensembl"/>
</dbReference>
<dbReference type="GO" id="GO:0042098">
    <property type="term" value="P:T cell proliferation"/>
    <property type="evidence" value="ECO:0007669"/>
    <property type="project" value="Ensembl"/>
</dbReference>
<dbReference type="GO" id="GO:0002296">
    <property type="term" value="P:T-helper 1 cell lineage commitment"/>
    <property type="evidence" value="ECO:0000314"/>
    <property type="project" value="UniProtKB"/>
</dbReference>
<dbReference type="InterPro" id="IPR038829">
    <property type="entry name" value="Leukosialin"/>
</dbReference>
<dbReference type="PANTHER" id="PTHR35265">
    <property type="entry name" value="LEUKOSIALIN"/>
    <property type="match status" value="1"/>
</dbReference>
<dbReference type="PANTHER" id="PTHR35265:SF1">
    <property type="entry name" value="LEUKOSIALIN"/>
    <property type="match status" value="1"/>
</dbReference>
<gene>
    <name type="primary">SPN</name>
    <name type="synonym">CD43</name>
</gene>